<accession>P08537</accession>
<accession>Q4V850</accession>
<reference key="1">
    <citation type="journal article" date="1988" name="Biochem. J.">
        <title>The complete sequence of a frog alpha-tubulin gene and its regulated expression in mouse L-cells.</title>
        <authorList>
            <person name="Smith D.J."/>
        </authorList>
    </citation>
    <scope>NUCLEOTIDE SEQUENCE [GENOMIC DNA / MRNA]</scope>
</reference>
<reference key="2">
    <citation type="submission" date="2005-10" db="EMBL/GenBank/DDBJ databases">
        <authorList>
            <consortium name="NIH - Xenopus Gene Collection (XGC) project"/>
        </authorList>
    </citation>
    <scope>NUCLEOTIDE SEQUENCE [LARGE SCALE MRNA]</scope>
    <source>
        <tissue>Embryo</tissue>
    </source>
</reference>
<feature type="chain" id="PRO_0000048238" description="Tubulin alpha chain">
    <location>
        <begin position="1"/>
        <end position="449"/>
    </location>
</feature>
<feature type="chain" id="PRO_0000437410" description="Detyrosinated tubulin alpha chain" evidence="4">
    <location>
        <begin position="1"/>
        <end position="448"/>
    </location>
</feature>
<feature type="region of interest" description="Disordered" evidence="5">
    <location>
        <begin position="430"/>
        <end position="449"/>
    </location>
</feature>
<feature type="short sequence motif" description="MREC motif" evidence="2">
    <location>
        <begin position="1"/>
        <end position="4"/>
    </location>
</feature>
<feature type="compositionally biased region" description="Acidic residues" evidence="5">
    <location>
        <begin position="431"/>
        <end position="449"/>
    </location>
</feature>
<feature type="active site" evidence="2">
    <location>
        <position position="254"/>
    </location>
</feature>
<feature type="binding site" evidence="2">
    <location>
        <position position="11"/>
    </location>
    <ligand>
        <name>GTP</name>
        <dbReference type="ChEBI" id="CHEBI:37565"/>
    </ligand>
</feature>
<feature type="binding site" evidence="2">
    <location>
        <position position="71"/>
    </location>
    <ligand>
        <name>GTP</name>
        <dbReference type="ChEBI" id="CHEBI:37565"/>
    </ligand>
</feature>
<feature type="binding site" evidence="2">
    <location>
        <position position="71"/>
    </location>
    <ligand>
        <name>Mg(2+)</name>
        <dbReference type="ChEBI" id="CHEBI:18420"/>
    </ligand>
</feature>
<feature type="binding site" evidence="2">
    <location>
        <position position="140"/>
    </location>
    <ligand>
        <name>GTP</name>
        <dbReference type="ChEBI" id="CHEBI:37565"/>
    </ligand>
</feature>
<feature type="binding site" evidence="2">
    <location>
        <position position="144"/>
    </location>
    <ligand>
        <name>GTP</name>
        <dbReference type="ChEBI" id="CHEBI:37565"/>
    </ligand>
</feature>
<feature type="binding site" evidence="2">
    <location>
        <position position="145"/>
    </location>
    <ligand>
        <name>GTP</name>
        <dbReference type="ChEBI" id="CHEBI:37565"/>
    </ligand>
</feature>
<feature type="binding site" evidence="2">
    <location>
        <position position="179"/>
    </location>
    <ligand>
        <name>GTP</name>
        <dbReference type="ChEBI" id="CHEBI:37565"/>
    </ligand>
</feature>
<feature type="binding site" evidence="2">
    <location>
        <position position="206"/>
    </location>
    <ligand>
        <name>GTP</name>
        <dbReference type="ChEBI" id="CHEBI:37565"/>
    </ligand>
</feature>
<feature type="binding site" evidence="2">
    <location>
        <position position="228"/>
    </location>
    <ligand>
        <name>GTP</name>
        <dbReference type="ChEBI" id="CHEBI:37565"/>
    </ligand>
</feature>
<feature type="site" description="Involved in polymerization">
    <location>
        <position position="449"/>
    </location>
</feature>
<feature type="modified residue" description="N6-acetyllysine" evidence="1 4">
    <location>
        <position position="40"/>
    </location>
</feature>
<feature type="sequence conflict" description="In Ref. 1; CAA30094." evidence="6" ref="1">
    <original>M</original>
    <variation>L</variation>
    <location>
        <position position="154"/>
    </location>
</feature>
<gene>
    <name type="primary">tuba</name>
    <name type="synonym">tuba1</name>
</gene>
<dbReference type="EC" id="3.6.5.-" evidence="2"/>
<dbReference type="EMBL" id="X07046">
    <property type="protein sequence ID" value="CAA30094.1"/>
    <property type="molecule type" value="mRNA"/>
</dbReference>
<dbReference type="EMBL" id="X07045">
    <property type="protein sequence ID" value="CAA30093.1"/>
    <property type="molecule type" value="Genomic_DNA"/>
</dbReference>
<dbReference type="EMBL" id="BC097546">
    <property type="protein sequence ID" value="AAH97546.1"/>
    <property type="molecule type" value="mRNA"/>
</dbReference>
<dbReference type="EMBL" id="BC106207">
    <property type="protein sequence ID" value="AAI06208.1"/>
    <property type="molecule type" value="mRNA"/>
</dbReference>
<dbReference type="PIR" id="S00253">
    <property type="entry name" value="S00253"/>
</dbReference>
<dbReference type="RefSeq" id="NP_001095253.1">
    <property type="nucleotide sequence ID" value="NM_001101783.1"/>
</dbReference>
<dbReference type="SMR" id="P08537"/>
<dbReference type="BioGRID" id="100638">
    <property type="interactions" value="1"/>
</dbReference>
<dbReference type="IntAct" id="P08537">
    <property type="interactions" value="2"/>
</dbReference>
<dbReference type="DNASU" id="100337592"/>
<dbReference type="GeneID" id="399313"/>
<dbReference type="KEGG" id="xla:100337592"/>
<dbReference type="CTD" id="100337592"/>
<dbReference type="CTD" id="399313"/>
<dbReference type="Xenbase" id="XB-GENE-866172">
    <property type="gene designation" value="XB22063824.L"/>
</dbReference>
<dbReference type="OMA" id="LICTHGL"/>
<dbReference type="OrthoDB" id="1844at2759"/>
<dbReference type="Proteomes" id="UP000186698">
    <property type="component" value="Chromosome 2L"/>
</dbReference>
<dbReference type="Bgee" id="100337592">
    <property type="expression patterns" value="Expressed in brain and 19 other cell types or tissues"/>
</dbReference>
<dbReference type="GO" id="GO:0005737">
    <property type="term" value="C:cytoplasm"/>
    <property type="evidence" value="ECO:0000318"/>
    <property type="project" value="GO_Central"/>
</dbReference>
<dbReference type="GO" id="GO:0005874">
    <property type="term" value="C:microtubule"/>
    <property type="evidence" value="ECO:0000318"/>
    <property type="project" value="GO_Central"/>
</dbReference>
<dbReference type="GO" id="GO:0005525">
    <property type="term" value="F:GTP binding"/>
    <property type="evidence" value="ECO:0000318"/>
    <property type="project" value="GO_Central"/>
</dbReference>
<dbReference type="GO" id="GO:0016787">
    <property type="term" value="F:hydrolase activity"/>
    <property type="evidence" value="ECO:0007669"/>
    <property type="project" value="UniProtKB-KW"/>
</dbReference>
<dbReference type="GO" id="GO:0046872">
    <property type="term" value="F:metal ion binding"/>
    <property type="evidence" value="ECO:0007669"/>
    <property type="project" value="UniProtKB-KW"/>
</dbReference>
<dbReference type="GO" id="GO:0005200">
    <property type="term" value="F:structural constituent of cytoskeleton"/>
    <property type="evidence" value="ECO:0000318"/>
    <property type="project" value="GO_Central"/>
</dbReference>
<dbReference type="GO" id="GO:0000226">
    <property type="term" value="P:microtubule cytoskeleton organization"/>
    <property type="evidence" value="ECO:0000318"/>
    <property type="project" value="GO_Central"/>
</dbReference>
<dbReference type="GO" id="GO:0000278">
    <property type="term" value="P:mitotic cell cycle"/>
    <property type="evidence" value="ECO:0000318"/>
    <property type="project" value="GO_Central"/>
</dbReference>
<dbReference type="CDD" id="cd02186">
    <property type="entry name" value="alpha_tubulin"/>
    <property type="match status" value="1"/>
</dbReference>
<dbReference type="FunFam" id="1.10.287.600:FF:000005">
    <property type="entry name" value="Tubulin alpha chain"/>
    <property type="match status" value="1"/>
</dbReference>
<dbReference type="FunFam" id="3.30.1330.20:FF:000001">
    <property type="entry name" value="Tubulin alpha chain"/>
    <property type="match status" value="1"/>
</dbReference>
<dbReference type="FunFam" id="3.40.50.1440:FF:000002">
    <property type="entry name" value="Tubulin alpha chain"/>
    <property type="match status" value="1"/>
</dbReference>
<dbReference type="Gene3D" id="1.10.287.600">
    <property type="entry name" value="Helix hairpin bin"/>
    <property type="match status" value="1"/>
</dbReference>
<dbReference type="Gene3D" id="3.30.1330.20">
    <property type="entry name" value="Tubulin/FtsZ, C-terminal domain"/>
    <property type="match status" value="1"/>
</dbReference>
<dbReference type="Gene3D" id="3.40.50.1440">
    <property type="entry name" value="Tubulin/FtsZ, GTPase domain"/>
    <property type="match status" value="1"/>
</dbReference>
<dbReference type="InterPro" id="IPR002452">
    <property type="entry name" value="Alpha_tubulin"/>
</dbReference>
<dbReference type="InterPro" id="IPR008280">
    <property type="entry name" value="Tub_FtsZ_C"/>
</dbReference>
<dbReference type="InterPro" id="IPR000217">
    <property type="entry name" value="Tubulin"/>
</dbReference>
<dbReference type="InterPro" id="IPR037103">
    <property type="entry name" value="Tubulin/FtsZ-like_C"/>
</dbReference>
<dbReference type="InterPro" id="IPR018316">
    <property type="entry name" value="Tubulin/FtsZ_2-layer-sand-dom"/>
</dbReference>
<dbReference type="InterPro" id="IPR036525">
    <property type="entry name" value="Tubulin/FtsZ_GTPase_sf"/>
</dbReference>
<dbReference type="InterPro" id="IPR023123">
    <property type="entry name" value="Tubulin_C"/>
</dbReference>
<dbReference type="InterPro" id="IPR017975">
    <property type="entry name" value="Tubulin_CS"/>
</dbReference>
<dbReference type="InterPro" id="IPR003008">
    <property type="entry name" value="Tubulin_FtsZ_GTPase"/>
</dbReference>
<dbReference type="PANTHER" id="PTHR11588">
    <property type="entry name" value="TUBULIN"/>
    <property type="match status" value="1"/>
</dbReference>
<dbReference type="Pfam" id="PF00091">
    <property type="entry name" value="Tubulin"/>
    <property type="match status" value="1"/>
</dbReference>
<dbReference type="Pfam" id="PF03953">
    <property type="entry name" value="Tubulin_C"/>
    <property type="match status" value="1"/>
</dbReference>
<dbReference type="PRINTS" id="PR01162">
    <property type="entry name" value="ALPHATUBULIN"/>
</dbReference>
<dbReference type="PRINTS" id="PR01161">
    <property type="entry name" value="TUBULIN"/>
</dbReference>
<dbReference type="SMART" id="SM00864">
    <property type="entry name" value="Tubulin"/>
    <property type="match status" value="1"/>
</dbReference>
<dbReference type="SMART" id="SM00865">
    <property type="entry name" value="Tubulin_C"/>
    <property type="match status" value="1"/>
</dbReference>
<dbReference type="SUPFAM" id="SSF55307">
    <property type="entry name" value="Tubulin C-terminal domain-like"/>
    <property type="match status" value="1"/>
</dbReference>
<dbReference type="SUPFAM" id="SSF52490">
    <property type="entry name" value="Tubulin nucleotide-binding domain-like"/>
    <property type="match status" value="1"/>
</dbReference>
<dbReference type="PROSITE" id="PS00227">
    <property type="entry name" value="TUBULIN"/>
    <property type="match status" value="1"/>
</dbReference>
<protein>
    <recommendedName>
        <fullName>Tubulin alpha chain</fullName>
        <ecNumber evidence="2">3.6.5.-</ecNumber>
    </recommendedName>
    <component>
        <recommendedName>
            <fullName>Detyrosinated tubulin alpha chain</fullName>
        </recommendedName>
    </component>
</protein>
<organism>
    <name type="scientific">Xenopus laevis</name>
    <name type="common">African clawed frog</name>
    <dbReference type="NCBI Taxonomy" id="8355"/>
    <lineage>
        <taxon>Eukaryota</taxon>
        <taxon>Metazoa</taxon>
        <taxon>Chordata</taxon>
        <taxon>Craniata</taxon>
        <taxon>Vertebrata</taxon>
        <taxon>Euteleostomi</taxon>
        <taxon>Amphibia</taxon>
        <taxon>Batrachia</taxon>
        <taxon>Anura</taxon>
        <taxon>Pipoidea</taxon>
        <taxon>Pipidae</taxon>
        <taxon>Xenopodinae</taxon>
        <taxon>Xenopus</taxon>
        <taxon>Xenopus</taxon>
    </lineage>
</organism>
<keyword id="KW-0007">Acetylation</keyword>
<keyword id="KW-0963">Cytoplasm</keyword>
<keyword id="KW-0206">Cytoskeleton</keyword>
<keyword id="KW-0342">GTP-binding</keyword>
<keyword id="KW-0378">Hydrolase</keyword>
<keyword id="KW-0460">Magnesium</keyword>
<keyword id="KW-0479">Metal-binding</keyword>
<keyword id="KW-0493">Microtubule</keyword>
<keyword id="KW-0547">Nucleotide-binding</keyword>
<keyword id="KW-1185">Reference proteome</keyword>
<comment type="function">
    <text>Tubulin is the major constituent of microtubules, a cylinder consisting of laterally associated linear protofilaments composed of alpha- and beta-tubulin heterodimers. Microtubules grow by the addition of GTP-tubulin dimers to the microtubule end, where a stabilizing cap forms. Below the cap, tubulin dimers are in GDP-bound state, owing to GTPase activity of alpha-tubulin.</text>
</comment>
<comment type="catalytic activity">
    <reaction evidence="2">
        <text>GTP + H2O = GDP + phosphate + H(+)</text>
        <dbReference type="Rhea" id="RHEA:19669"/>
        <dbReference type="ChEBI" id="CHEBI:15377"/>
        <dbReference type="ChEBI" id="CHEBI:15378"/>
        <dbReference type="ChEBI" id="CHEBI:37565"/>
        <dbReference type="ChEBI" id="CHEBI:43474"/>
        <dbReference type="ChEBI" id="CHEBI:58189"/>
    </reaction>
    <physiologicalReaction direction="left-to-right" evidence="2">
        <dbReference type="Rhea" id="RHEA:19670"/>
    </physiologicalReaction>
</comment>
<comment type="cofactor">
    <cofactor evidence="2">
        <name>Mg(2+)</name>
        <dbReference type="ChEBI" id="CHEBI:18420"/>
    </cofactor>
</comment>
<comment type="subunit">
    <text>Dimer of alpha and beta chains. A typical microtubule is a hollow water-filled tube with an outer diameter of 25 nm and an inner diameter of 15 nM. Alpha-beta heterodimers associate head-to-tail to form protofilaments running lengthwise along the microtubule wall with the beta-tubulin subunit facing the microtubule plus end conferring a structural polarity. Microtubules usually have 13 protofilaments but different protofilament numbers can be found in some organisms and specialized cells.</text>
</comment>
<comment type="subcellular location">
    <subcellularLocation>
        <location>Cytoplasm</location>
        <location>Cytoskeleton</location>
    </subcellularLocation>
</comment>
<comment type="domain">
    <text evidence="2">The MREC motif may be critical for tubulin autoregulation.</text>
</comment>
<comment type="PTM">
    <text evidence="3">Some glutamate residues at the C-terminus are polyglycylated, resulting in polyglycine chains on the gamma-carboxyl group. Glycylation is mainly limited to tubulin incorporated into axonemes (cilia and flagella) whereas glutamylation is prevalent in neuronal cells, centrioles, axonemes, and the mitotic spindle. Both modifications can coexist on the same protein on adjacent residues, and lowering polyglycylation levels increases polyglutamylation, and reciprocally. The precise function of polyglycylation is still unclear.</text>
</comment>
<comment type="PTM">
    <text evidence="3 4">Some glutamate residues at the C-terminus are polyglutamylated, resulting in polyglutamate chains on the gamma-carboxyl group (By similarity). Polyglutamylation plays a key role in microtubule severing by spastin (SPAST). SPAST preferentially recognizes and acts on microtubules decorated with short polyglutamate tails: severing activity by SPAST increases as the number of glutamates per tubulin rises from one to eight, but decreases beyond this glutamylation threshold (By similarity).</text>
</comment>
<comment type="PTM">
    <text evidence="4">Acetylation of alpha chains at Lys-40 is located inside the microtubule lumen. This modification has been correlated with increased microtubule stability, intracellular transport and ciliary assembly.</text>
</comment>
<comment type="PTM">
    <text evidence="3 4">Undergoes a tyrosination/detyrosination cycle, the cyclic removal and re-addition of a C-terminal tyrosine residue by the enzymes tubulin tyrosine carboxypeptidase (MATCAP1, VASH1 or VASH2) and tubulin tyrosine ligase (TTL), respectively.</text>
</comment>
<comment type="PTM">
    <molecule>Tubulin alpha chain</molecule>
    <text evidence="3 4">Tyrosination promotes microtubule interaction with CAP-Gly microtubule plus-end tracking proteins. Tyrosinated tubulins regulate the initiation of dynein-driven motility.</text>
</comment>
<comment type="PTM">
    <molecule>Detyrosinated tubulin alpha chain</molecule>
    <text evidence="3 4">Detyrosination is involved in metaphase plate congression by guiding chromosomes during mitosis (By similarity). Detyrosination increases microtubules-dependent mechanotransduction in dystrophic cardiac and skeletal muscle. In cardiomyocytes, detyrosinated microtubules are required to resist to contractile compression during contraction (By similarity).</text>
</comment>
<comment type="similarity">
    <text evidence="6">Belongs to the tubulin family.</text>
</comment>
<proteinExistence type="evidence at transcript level"/>
<sequence length="449" mass="49879">MRECISIHVGQAGVQIGNACWELYCLEHGIQPDGQMPSDKTIGGGDDSFNTFFSETGAGKHVPRAVFVDLEPTVIDEVRTGTYRQLFHPEQLITGKEDAANNYARGHYTIGKEIIDLVLDRIRKLADQCTGLQGFLVFHSFGGGTGSGFTSLLMERLSVDYGKKSKLEFAIYPAPQVSTAVVEPYNSILTTHTTLEHSDCAFMVDNEAIYDICRRNLDIERPTYTNLNRLISQIVSSITASLRFDGALNVDLTEFQTNLVPYPRIHFPLATYAPVISAEKAYHEQLTVADITNACFEPANQMVKCDPRHGKYMACCLLYRGDVVPKDVNAAIATIKTKRSIQFVDWCPTGFKVGINYQPPTVVPGGDLAKVQRAVCMLSNTTAIAEAWARLDHKFDLMYAKRAFVHWYVGEGMEEGEFSEAREDMAALEKDYEEVGADSADAEDEGEEY</sequence>
<name>TBA_XENLA</name>
<evidence type="ECO:0000250" key="1">
    <source>
        <dbReference type="UniProtKB" id="P41351"/>
    </source>
</evidence>
<evidence type="ECO:0000250" key="2">
    <source>
        <dbReference type="UniProtKB" id="P68363"/>
    </source>
</evidence>
<evidence type="ECO:0000250" key="3">
    <source>
        <dbReference type="UniProtKB" id="P68369"/>
    </source>
</evidence>
<evidence type="ECO:0000250" key="4">
    <source>
        <dbReference type="UniProtKB" id="Q71U36"/>
    </source>
</evidence>
<evidence type="ECO:0000256" key="5">
    <source>
        <dbReference type="SAM" id="MobiDB-lite"/>
    </source>
</evidence>
<evidence type="ECO:0000305" key="6"/>